<evidence type="ECO:0000250" key="1"/>
<evidence type="ECO:0000269" key="2">
    <source>
    </source>
</evidence>
<evidence type="ECO:0000269" key="3">
    <source>
    </source>
</evidence>
<evidence type="ECO:0000305" key="4"/>
<evidence type="ECO:0007829" key="5">
    <source>
        <dbReference type="PDB" id="2ZAD"/>
    </source>
</evidence>
<reference key="1">
    <citation type="journal article" date="1999" name="Nature">
        <title>Evidence for lateral gene transfer between Archaea and Bacteria from genome sequence of Thermotoga maritima.</title>
        <authorList>
            <person name="Nelson K.E."/>
            <person name="Clayton R.A."/>
            <person name="Gill S.R."/>
            <person name="Gwinn M.L."/>
            <person name="Dodson R.J."/>
            <person name="Haft D.H."/>
            <person name="Hickey E.K."/>
            <person name="Peterson J.D."/>
            <person name="Nelson W.C."/>
            <person name="Ketchum K.A."/>
            <person name="McDonald L.A."/>
            <person name="Utterback T.R."/>
            <person name="Malek J.A."/>
            <person name="Linher K.D."/>
            <person name="Garrett M.M."/>
            <person name="Stewart A.M."/>
            <person name="Cotton M.D."/>
            <person name="Pratt M.S."/>
            <person name="Phillips C.A."/>
            <person name="Richardson D.L."/>
            <person name="Heidelberg J.F."/>
            <person name="Sutton G.G."/>
            <person name="Fleischmann R.D."/>
            <person name="Eisen J.A."/>
            <person name="White O."/>
            <person name="Salzberg S.L."/>
            <person name="Smith H.O."/>
            <person name="Venter J.C."/>
            <person name="Fraser C.M."/>
        </authorList>
    </citation>
    <scope>NUCLEOTIDE SEQUENCE [LARGE SCALE GENOMIC DNA]</scope>
    <source>
        <strain>ATCC 43589 / DSM 3109 / JCM 10099 / NBRC 100826 / MSB8</strain>
    </source>
</reference>
<reference key="2">
    <citation type="journal article" date="2001" name="Biochemistry">
        <title>Evolution of enzymatic activities in the enolase superfamily: functional assignment of unknown proteins in Bacillus subtilis and Escherichia coli as L-Ala-D/L-Glu epimerases.</title>
        <authorList>
            <person name="Schmidt D.M.Z."/>
            <person name="Hubbard B.K."/>
            <person name="Gerlt J.A."/>
        </authorList>
    </citation>
    <scope>CATALYTIC ACTIVITY</scope>
</reference>
<reference key="3">
    <citation type="journal article" date="2008" name="Structure">
        <title>Discovery of a dipeptide epimerase enzymatic function guided by homology modeling and virtual screening.</title>
        <authorList>
            <person name="Kalyanaraman C."/>
            <person name="Imker H.J."/>
            <person name="Fedorov A.A."/>
            <person name="Fedorov E.V."/>
            <person name="Glasner M.E."/>
            <person name="Babbitt P.C."/>
            <person name="Almo S.C."/>
            <person name="Gerlt J.A."/>
            <person name="Jacobson M.P."/>
        </authorList>
    </citation>
    <scope>X-RAY CRYSTALLOGRAPHY (1.9 ANGSTROMS) OF APOENZYME AND IN COMPLEXES WITH SUBSTRATE AND MAGNESIUM</scope>
    <scope>FUNCTION</scope>
    <scope>CATALYTIC ACTIVITY</scope>
    <scope>SUBSTRATE SPECIFICITY</scope>
    <scope>BIOPHYSICOCHEMICAL PROPERTIES</scope>
    <source>
        <strain>ATCC 43589 / DSM 3109 / JCM 10099 / NBRC 100826 / MSB8</strain>
    </source>
</reference>
<reference key="4">
    <citation type="submission" date="2009-02" db="PDB data bank">
        <title>Crystal structure of muconate cycloisomerase from Thermotoga maritima MSB8.</title>
        <authorList>
            <consortium name="RIKEN structural genomics initiative (RSGI)"/>
        </authorList>
    </citation>
    <scope>X-RAY CRYSTALLOGRAPHY (1.6 ANGSTROMS)</scope>
    <source>
        <strain>ATCC 43589 / DSM 3109 / JCM 10099 / NBRC 100826 / MSB8</strain>
    </source>
</reference>
<dbReference type="EC" id="5.1.1.20" evidence="2 3"/>
<dbReference type="EMBL" id="AE000512">
    <property type="protein sequence ID" value="AAD35100.1"/>
    <property type="molecule type" value="Genomic_DNA"/>
</dbReference>
<dbReference type="PIR" id="H72429">
    <property type="entry name" value="H72429"/>
</dbReference>
<dbReference type="RefSeq" id="NP_227822.1">
    <property type="nucleotide sequence ID" value="NC_000853.1"/>
</dbReference>
<dbReference type="RefSeq" id="WP_004082436.1">
    <property type="nucleotide sequence ID" value="NC_000853.1"/>
</dbReference>
<dbReference type="PDB" id="2ZAD">
    <property type="method" value="X-ray"/>
    <property type="resolution" value="1.60 A"/>
    <property type="chains" value="A/B/C/D=1-345"/>
</dbReference>
<dbReference type="PDB" id="3DEQ">
    <property type="method" value="X-ray"/>
    <property type="resolution" value="2.10 A"/>
    <property type="chains" value="A/B/C/D=1-345"/>
</dbReference>
<dbReference type="PDB" id="3DER">
    <property type="method" value="X-ray"/>
    <property type="resolution" value="1.90 A"/>
    <property type="chains" value="A/B/C/D=1-345"/>
</dbReference>
<dbReference type="PDB" id="3DES">
    <property type="method" value="X-ray"/>
    <property type="resolution" value="2.30 A"/>
    <property type="chains" value="A/B/C/D=1-345"/>
</dbReference>
<dbReference type="PDB" id="3DFY">
    <property type="method" value="X-ray"/>
    <property type="resolution" value="2.10 A"/>
    <property type="chains" value="A/B/C/D/E/F/G/H/I/J/K/L/M/N/O/P=1-345"/>
</dbReference>
<dbReference type="PDBsum" id="2ZAD"/>
<dbReference type="PDBsum" id="3DEQ"/>
<dbReference type="PDBsum" id="3DER"/>
<dbReference type="PDBsum" id="3DES"/>
<dbReference type="PDBsum" id="3DFY"/>
<dbReference type="SMR" id="Q9WXM1"/>
<dbReference type="FunCoup" id="Q9WXM1">
    <property type="interactions" value="107"/>
</dbReference>
<dbReference type="STRING" id="243274.TM_0006"/>
<dbReference type="PaxDb" id="243274-THEMA_04770"/>
<dbReference type="DNASU" id="896814"/>
<dbReference type="EnsemblBacteria" id="AAD35100">
    <property type="protein sequence ID" value="AAD35100"/>
    <property type="gene ID" value="TM_0006"/>
</dbReference>
<dbReference type="KEGG" id="tma:TM0006"/>
<dbReference type="KEGG" id="tmi:THEMA_04770"/>
<dbReference type="KEGG" id="tmm:Tmari_0003"/>
<dbReference type="KEGG" id="tmw:THMA_0002"/>
<dbReference type="eggNOG" id="COG4948">
    <property type="taxonomic scope" value="Bacteria"/>
</dbReference>
<dbReference type="InParanoid" id="Q9WXM1"/>
<dbReference type="OrthoDB" id="9775391at2"/>
<dbReference type="SABIO-RK" id="Q9WXM1"/>
<dbReference type="UniPathway" id="UPA00549"/>
<dbReference type="EvolutionaryTrace" id="Q9WXM1"/>
<dbReference type="Proteomes" id="UP000008183">
    <property type="component" value="Chromosome"/>
</dbReference>
<dbReference type="GO" id="GO:0103031">
    <property type="term" value="F:L-Ala-D/L-Glu epimerase activity"/>
    <property type="evidence" value="ECO:0007669"/>
    <property type="project" value="UniProtKB-EC"/>
</dbReference>
<dbReference type="GO" id="GO:0046872">
    <property type="term" value="F:metal ion binding"/>
    <property type="evidence" value="ECO:0007669"/>
    <property type="project" value="UniProtKB-KW"/>
</dbReference>
<dbReference type="GO" id="GO:0016854">
    <property type="term" value="F:racemase and epimerase activity"/>
    <property type="evidence" value="ECO:0000318"/>
    <property type="project" value="GO_Central"/>
</dbReference>
<dbReference type="GO" id="GO:0016855">
    <property type="term" value="F:racemase and epimerase activity, acting on amino acids and derivatives"/>
    <property type="evidence" value="ECO:0000314"/>
    <property type="project" value="CACAO"/>
</dbReference>
<dbReference type="GO" id="GO:0016998">
    <property type="term" value="P:cell wall macromolecule catabolic process"/>
    <property type="evidence" value="ECO:0007669"/>
    <property type="project" value="UniProtKB-UniPathway"/>
</dbReference>
<dbReference type="GO" id="GO:0071555">
    <property type="term" value="P:cell wall organization"/>
    <property type="evidence" value="ECO:0007669"/>
    <property type="project" value="UniProtKB-KW"/>
</dbReference>
<dbReference type="GO" id="GO:0006518">
    <property type="term" value="P:peptide metabolic process"/>
    <property type="evidence" value="ECO:0000318"/>
    <property type="project" value="GO_Central"/>
</dbReference>
<dbReference type="CDD" id="cd03319">
    <property type="entry name" value="L-Ala-DL-Glu_epimerase"/>
    <property type="match status" value="1"/>
</dbReference>
<dbReference type="Gene3D" id="3.20.20.120">
    <property type="entry name" value="Enolase-like C-terminal domain"/>
    <property type="match status" value="1"/>
</dbReference>
<dbReference type="Gene3D" id="3.30.390.10">
    <property type="entry name" value="Enolase-like, N-terminal domain"/>
    <property type="match status" value="1"/>
</dbReference>
<dbReference type="InterPro" id="IPR034603">
    <property type="entry name" value="Dipeptide_epimerase"/>
</dbReference>
<dbReference type="InterPro" id="IPR036849">
    <property type="entry name" value="Enolase-like_C_sf"/>
</dbReference>
<dbReference type="InterPro" id="IPR029017">
    <property type="entry name" value="Enolase-like_N"/>
</dbReference>
<dbReference type="InterPro" id="IPR029065">
    <property type="entry name" value="Enolase_C-like"/>
</dbReference>
<dbReference type="InterPro" id="IPR013342">
    <property type="entry name" value="Mandelate_racemase_C"/>
</dbReference>
<dbReference type="InterPro" id="IPR013341">
    <property type="entry name" value="Mandelate_racemase_N_dom"/>
</dbReference>
<dbReference type="InterPro" id="IPR053602">
    <property type="entry name" value="MR_MLE-like"/>
</dbReference>
<dbReference type="NCBIfam" id="NF041118">
    <property type="entry name" value="A_G_epim_Thtga"/>
    <property type="match status" value="1"/>
</dbReference>
<dbReference type="PANTHER" id="PTHR48073:SF2">
    <property type="entry name" value="O-SUCCINYLBENZOATE SYNTHASE"/>
    <property type="match status" value="1"/>
</dbReference>
<dbReference type="PANTHER" id="PTHR48073">
    <property type="entry name" value="O-SUCCINYLBENZOATE SYNTHASE-RELATED"/>
    <property type="match status" value="1"/>
</dbReference>
<dbReference type="Pfam" id="PF13378">
    <property type="entry name" value="MR_MLE_C"/>
    <property type="match status" value="1"/>
</dbReference>
<dbReference type="Pfam" id="PF02746">
    <property type="entry name" value="MR_MLE_N"/>
    <property type="match status" value="1"/>
</dbReference>
<dbReference type="SFLD" id="SFLDS00001">
    <property type="entry name" value="Enolase"/>
    <property type="match status" value="1"/>
</dbReference>
<dbReference type="SFLD" id="SFLDG00180">
    <property type="entry name" value="muconate_cycloisomerase"/>
    <property type="match status" value="1"/>
</dbReference>
<dbReference type="SMART" id="SM00922">
    <property type="entry name" value="MR_MLE"/>
    <property type="match status" value="1"/>
</dbReference>
<dbReference type="SUPFAM" id="SSF51604">
    <property type="entry name" value="Enolase C-terminal domain-like"/>
    <property type="match status" value="1"/>
</dbReference>
<dbReference type="SUPFAM" id="SSF54826">
    <property type="entry name" value="Enolase N-terminal domain-like"/>
    <property type="match status" value="1"/>
</dbReference>
<feature type="chain" id="PRO_0000388972" description="L-Ala-D/L-Glu epimerase">
    <location>
        <begin position="1"/>
        <end position="345"/>
    </location>
</feature>
<feature type="active site" description="Proton acceptor; specific for (R)-substrate epimerization" evidence="1">
    <location>
        <position position="161"/>
    </location>
</feature>
<feature type="active site" description="Proton acceptor; specific for (S)-substrate epimerization" evidence="1">
    <location>
        <position position="265"/>
    </location>
</feature>
<feature type="binding site">
    <location>
        <position position="134"/>
    </location>
    <ligand>
        <name>substrate</name>
    </ligand>
</feature>
<feature type="binding site">
    <location>
        <position position="159"/>
    </location>
    <ligand>
        <name>substrate</name>
    </ligand>
</feature>
<feature type="binding site">
    <location>
        <position position="188"/>
    </location>
    <ligand>
        <name>Mg(2+)</name>
        <dbReference type="ChEBI" id="CHEBI:18420"/>
    </ligand>
</feature>
<feature type="binding site">
    <location>
        <position position="190"/>
    </location>
    <ligand>
        <name>substrate</name>
    </ligand>
</feature>
<feature type="binding site">
    <location>
        <position position="216"/>
    </location>
    <ligand>
        <name>Mg(2+)</name>
        <dbReference type="ChEBI" id="CHEBI:18420"/>
    </ligand>
</feature>
<feature type="binding site">
    <location>
        <position position="241"/>
    </location>
    <ligand>
        <name>Mg(2+)</name>
        <dbReference type="ChEBI" id="CHEBI:18420"/>
    </ligand>
</feature>
<feature type="binding site">
    <location>
        <position position="292"/>
    </location>
    <ligand>
        <name>substrate</name>
    </ligand>
</feature>
<feature type="binding site">
    <location>
        <position position="317"/>
    </location>
    <ligand>
        <name>substrate</name>
    </ligand>
</feature>
<feature type="binding site">
    <location>
        <position position="319"/>
    </location>
    <ligand>
        <name>substrate</name>
    </ligand>
</feature>
<feature type="strand" evidence="5">
    <location>
        <begin position="3"/>
        <end position="22"/>
    </location>
</feature>
<feature type="strand" evidence="5">
    <location>
        <begin position="25"/>
        <end position="39"/>
    </location>
</feature>
<feature type="strand" evidence="5">
    <location>
        <begin position="44"/>
        <end position="49"/>
    </location>
</feature>
<feature type="helix" evidence="5">
    <location>
        <begin position="53"/>
        <end position="56"/>
    </location>
</feature>
<feature type="helix" evidence="5">
    <location>
        <begin position="60"/>
        <end position="65"/>
    </location>
</feature>
<feature type="helix" evidence="5">
    <location>
        <begin position="67"/>
        <end position="74"/>
    </location>
</feature>
<feature type="helix" evidence="5">
    <location>
        <begin position="79"/>
        <end position="81"/>
    </location>
</feature>
<feature type="helix" evidence="5">
    <location>
        <begin position="82"/>
        <end position="89"/>
    </location>
</feature>
<feature type="helix" evidence="5">
    <location>
        <begin position="96"/>
        <end position="114"/>
    </location>
</feature>
<feature type="helix" evidence="5">
    <location>
        <begin position="118"/>
        <end position="121"/>
    </location>
</feature>
<feature type="strand" evidence="5">
    <location>
        <begin position="127"/>
        <end position="131"/>
    </location>
</feature>
<feature type="strand" evidence="5">
    <location>
        <begin position="133"/>
        <end position="135"/>
    </location>
</feature>
<feature type="helix" evidence="5">
    <location>
        <begin position="140"/>
        <end position="152"/>
    </location>
</feature>
<feature type="strand" evidence="5">
    <location>
        <begin position="156"/>
        <end position="161"/>
    </location>
</feature>
<feature type="helix" evidence="5">
    <location>
        <begin position="166"/>
        <end position="179"/>
    </location>
</feature>
<feature type="strand" evidence="5">
    <location>
        <begin position="184"/>
        <end position="188"/>
    </location>
</feature>
<feature type="helix" evidence="5">
    <location>
        <begin position="195"/>
        <end position="207"/>
    </location>
</feature>
<feature type="strand" evidence="5">
    <location>
        <begin position="213"/>
        <end position="216"/>
    </location>
</feature>
<feature type="helix" evidence="5">
    <location>
        <begin position="224"/>
        <end position="233"/>
    </location>
</feature>
<feature type="strand" evidence="5">
    <location>
        <begin position="234"/>
        <end position="236"/>
    </location>
</feature>
<feature type="strand" evidence="5">
    <location>
        <begin position="238"/>
        <end position="241"/>
    </location>
</feature>
<feature type="helix" evidence="5">
    <location>
        <begin position="247"/>
        <end position="256"/>
    </location>
</feature>
<feature type="strand" evidence="5">
    <location>
        <begin position="260"/>
        <end position="264"/>
    </location>
</feature>
<feature type="helix" evidence="5">
    <location>
        <begin position="266"/>
        <end position="282"/>
    </location>
</feature>
<feature type="turn" evidence="5">
    <location>
        <begin position="283"/>
        <end position="285"/>
    </location>
</feature>
<feature type="strand" evidence="5">
    <location>
        <begin position="287"/>
        <end position="290"/>
    </location>
</feature>
<feature type="helix" evidence="5">
    <location>
        <begin position="297"/>
        <end position="310"/>
    </location>
</feature>
<feature type="strand" evidence="5">
    <location>
        <begin position="314"/>
        <end position="316"/>
    </location>
</feature>
<feature type="helix" evidence="5">
    <location>
        <begin position="320"/>
        <end position="323"/>
    </location>
</feature>
<feature type="strand" evidence="5">
    <location>
        <begin position="324"/>
        <end position="326"/>
    </location>
</feature>
<feature type="strand" evidence="5">
    <location>
        <begin position="332"/>
        <end position="336"/>
    </location>
</feature>
<feature type="strand" evidence="5">
    <location>
        <begin position="339"/>
        <end position="341"/>
    </location>
</feature>
<protein>
    <recommendedName>
        <fullName>L-Ala-D/L-Glu epimerase</fullName>
        <shortName>AE epimerase</shortName>
        <shortName>AEE</shortName>
        <ecNumber evidence="2 3">5.1.1.20</ecNumber>
    </recommendedName>
</protein>
<accession>Q9WXM1</accession>
<organism>
    <name type="scientific">Thermotoga maritima (strain ATCC 43589 / DSM 3109 / JCM 10099 / NBRC 100826 / MSB8)</name>
    <dbReference type="NCBI Taxonomy" id="243274"/>
    <lineage>
        <taxon>Bacteria</taxon>
        <taxon>Thermotogati</taxon>
        <taxon>Thermotogota</taxon>
        <taxon>Thermotogae</taxon>
        <taxon>Thermotogales</taxon>
        <taxon>Thermotogaceae</taxon>
        <taxon>Thermotoga</taxon>
    </lineage>
</organism>
<name>AEEP_THEMA</name>
<comment type="function">
    <text evidence="3">Catalyzes the epimerization of L-Ala-D-Glu to L-Ala-L-Glu and has probably a role in the metabolism of the murein peptide, of which L-Ala-D-Glu is a component. Is also able to catalyze the reverse reaction and the epimerization of a broad range of other dipeptides; is most efficient with L-Ala-D/L-Phe, L-Ala-D/L-Tyr, and L-Ala-D/L-His.</text>
</comment>
<comment type="catalytic activity">
    <reaction evidence="2 3">
        <text>L-alanyl-L-glutamate = L-alanyl-D-glutamate</text>
        <dbReference type="Rhea" id="RHEA:28394"/>
        <dbReference type="ChEBI" id="CHEBI:61395"/>
        <dbReference type="ChEBI" id="CHEBI:61396"/>
        <dbReference type="EC" id="5.1.1.20"/>
    </reaction>
</comment>
<comment type="cofactor">
    <cofactor evidence="1">
        <name>Mg(2+)</name>
        <dbReference type="ChEBI" id="CHEBI:18420"/>
    </cofactor>
    <text evidence="1">Binds 1 Mg(2+) ion per subunit.</text>
</comment>
<comment type="biophysicochemical properties">
    <kinetics>
        <KM evidence="3">2.8 mM for L-Ala-L-Glu (at pH 7.5 and 28 degrees Celsius)</KM>
        <KM evidence="3">1.3 mM for L-Ala-L-Phe (at pH 7.5 and 28 degrees Celsius)</KM>
        <KM evidence="3">0.71 mM for L-Ala-L-Tyr (at pH 7.5 and 28 degrees Celsius)</KM>
        <KM evidence="3">5.3 mM for L-Ala-L-His (at pH 7.5 and 28 degrees Celsius)</KM>
        <KM evidence="3">2.9 mM for L-Ala-L-Leu (at pH 7.5 and 28 degrees Celsius)</KM>
        <KM evidence="3">4.7 mM for L-Ile-L-Phe (at pH 7.5 and 28 degrees Celsius)</KM>
        <KM evidence="3">3.9 mM for L-Lys-L-Phe (at pH 7.5 and 28 degrees Celsius)</KM>
    </kinetics>
</comment>
<comment type="pathway">
    <text>Cell wall degradation; peptidoglycan degradation.</text>
</comment>
<comment type="similarity">
    <text evidence="4">Belongs to the mandelate racemase/muconate lactonizing enzyme family.</text>
</comment>
<keyword id="KW-0002">3D-structure</keyword>
<keyword id="KW-0961">Cell wall biogenesis/degradation</keyword>
<keyword id="KW-0413">Isomerase</keyword>
<keyword id="KW-0460">Magnesium</keyword>
<keyword id="KW-0479">Metal-binding</keyword>
<keyword id="KW-1185">Reference proteome</keyword>
<sequence>MSRIVNVKLSLKRYEYEKPFHITGSVSSESRNVEVEIVLESGVKGYGEASPSFRVNGERVEALLAIENAVREMITGIDVRNYARIFEITDRLFGFPSLKAAVQFATLDALSQELGTQVCYLLGGKRDEIETDKTVGIDTVENRVKEAKKIFEEGFRVIKIKVGENLKEDIEAVEEIAKVTRGAKYIVDANMGYTQKEAVEFARAVYQKGIDIAVYEQPVRREDIEGLKFVRFHSPFPVAADESARTKFDVMRLVKEEAVDYVNIKLMKSGISDALAIVEIAESSGLKLMIGCMGESSLGINQSVHFALGTGAFEFHDLDSHLMLKEEVFRGKFIQDGPRMRVKDQ</sequence>
<gene>
    <name type="ordered locus">TM_0006</name>
</gene>
<proteinExistence type="evidence at protein level"/>